<sequence>MNQVIKTIALCYQKYISRASNKTFSIHNTLSLSLLPKCLLGSLIIYTSHAFGEMELAISGHKYGKDRDAFTMISSCPEGTNYMINRKLILSEFSSLDKFSSGGAFKNLAGKIAFLGKHSSSSIHFKHLNINGFGSGIFSESAIEFSDLRKLVAFGSESTGGIFTARDDISFKNNHYIAFRNNIAKGNGGVILLQGDERGTVSFTDQQGAIIFANNQALVSPSIKHSGRGGAISGDFAGSRIIFLNNQQITFEENSAVHGGAIYNKNGVVEFLGNGGTLSFKENSTRANGGAIYTGKFKANQQTAPIIFSQNNANQKGGAIYAQYVNLEQNQDAIRFENNSAKEGGGAISSSQCAITAHNSITFSNNFAGDLGGGAILLGGKQPSLSLVAHNGNIAFIGNTMLPATKKASLPRNNSILVKESPYKIQFAANKNRSIIFFDPVIALSPSTSPVEINSPEHETPFFSPKGTIVFSGANLIDDAKEDIANRTSIFNQPVLLHNGTLSIESGAHLVVQSFKQTGGRISLSPGSSLALYTTNTLFHGNVSSTDPLEINGLSLGVDTSPSNLYSEIRAGSAPLKLSGSPDIHDPERLFYENRDSAASPYQMEILLSSDKIIDVSNFTIDAPVPNKEAGFQGSWHFSWQPNTVNNTKHKVLRASWIPTGEYILEPSRVGNAIPNSLWSTFLLLQTASHNLGDHLCNNSDLVPTSYLGLLIGGIGAEMRTYSAEKESFISRSGTTGTTIIRLTPTLTLSGGATHMFGDSFVTKLPEFIASEGMVQNVGLTQILGPLTVKSTLCAALDHNAMIRLSAQKNHTRAKWDTFGIRGTLGASYSLLDYENMVRIFTFANVEATNVLQKSFTETGYNPRSFARTRLTNIAVPVGIGYEFCLSNHSFALLGKGHIGYSRDIKRKNPVTFAQLAMNNFSWTANGCQVPTSAHTIANQLILRYKACSLYVNAVATKLESTYLSSSLSCGGYVGF</sequence>
<protein>
    <recommendedName>
        <fullName>Probable outer membrane protein PmpA</fullName>
    </recommendedName>
    <alternativeName>
        <fullName>Polymorphic membrane protein A</fullName>
    </alternativeName>
</protein>
<feature type="signal peptide" evidence="1">
    <location>
        <begin position="1"/>
        <end position="50"/>
    </location>
</feature>
<feature type="chain" id="PRO_0000024716" description="Probable outer membrane protein PmpA">
    <location>
        <begin position="51"/>
        <end position="976"/>
    </location>
</feature>
<feature type="domain" description="Autotransporter" evidence="2">
    <location>
        <begin position="671"/>
        <end position="976"/>
    </location>
</feature>
<name>PMPA_CHLMU</name>
<organism>
    <name type="scientific">Chlamydia muridarum (strain MoPn / Nigg)</name>
    <dbReference type="NCBI Taxonomy" id="243161"/>
    <lineage>
        <taxon>Bacteria</taxon>
        <taxon>Pseudomonadati</taxon>
        <taxon>Chlamydiota</taxon>
        <taxon>Chlamydiia</taxon>
        <taxon>Chlamydiales</taxon>
        <taxon>Chlamydiaceae</taxon>
        <taxon>Chlamydia/Chlamydophila group</taxon>
        <taxon>Chlamydia</taxon>
    </lineage>
</organism>
<comment type="subcellular location">
    <subcellularLocation>
        <location>Secreted</location>
        <location>Cell wall</location>
    </subcellularLocation>
    <subcellularLocation>
        <location evidence="3">Cell outer membrane</location>
        <topology evidence="3">Peripheral membrane protein</topology>
        <orientation evidence="3">Extracellular side</orientation>
    </subcellularLocation>
</comment>
<comment type="developmental stage">
    <text>Elementary body.</text>
</comment>
<comment type="similarity">
    <text evidence="3">Belongs to the PMP outer membrane protein family.</text>
</comment>
<comment type="sequence caution" evidence="3">
    <conflict type="erroneous initiation">
        <sequence resource="EMBL-CDS" id="AAF39509"/>
    </conflict>
</comment>
<keyword id="KW-0998">Cell outer membrane</keyword>
<keyword id="KW-0134">Cell wall</keyword>
<keyword id="KW-0472">Membrane</keyword>
<keyword id="KW-0964">Secreted</keyword>
<keyword id="KW-0732">Signal</keyword>
<keyword id="KW-0812">Transmembrane</keyword>
<keyword id="KW-1134">Transmembrane beta strand</keyword>
<dbReference type="EMBL" id="AE002160">
    <property type="protein sequence ID" value="AAF39509.1"/>
    <property type="status" value="ALT_INIT"/>
    <property type="molecule type" value="Genomic_DNA"/>
</dbReference>
<dbReference type="PIR" id="B81675">
    <property type="entry name" value="B81675"/>
</dbReference>
<dbReference type="RefSeq" id="WP_010231239.1">
    <property type="nucleotide sequence ID" value="NZ_CP063055.1"/>
</dbReference>
<dbReference type="GeneID" id="1246054"/>
<dbReference type="KEGG" id="cmu:TC_0693"/>
<dbReference type="eggNOG" id="COG4625">
    <property type="taxonomic scope" value="Bacteria"/>
</dbReference>
<dbReference type="HOGENOM" id="CLU_004549_1_1_0"/>
<dbReference type="OrthoDB" id="18852at2"/>
<dbReference type="Proteomes" id="UP000000800">
    <property type="component" value="Chromosome"/>
</dbReference>
<dbReference type="GO" id="GO:0009279">
    <property type="term" value="C:cell outer membrane"/>
    <property type="evidence" value="ECO:0007669"/>
    <property type="project" value="UniProtKB-SubCell"/>
</dbReference>
<dbReference type="GO" id="GO:0005576">
    <property type="term" value="C:extracellular region"/>
    <property type="evidence" value="ECO:0007669"/>
    <property type="project" value="UniProtKB-KW"/>
</dbReference>
<dbReference type="InterPro" id="IPR005546">
    <property type="entry name" value="Autotransporte_beta"/>
</dbReference>
<dbReference type="InterPro" id="IPR036709">
    <property type="entry name" value="Autotransporte_beta_dom_sf"/>
</dbReference>
<dbReference type="InterPro" id="IPR011427">
    <property type="entry name" value="Polymorphic_membr_middle"/>
</dbReference>
<dbReference type="InterPro" id="IPR003368">
    <property type="entry name" value="POMP_repeat"/>
</dbReference>
<dbReference type="NCBIfam" id="TIGR01376">
    <property type="entry name" value="POMP_repeat"/>
    <property type="match status" value="4"/>
</dbReference>
<dbReference type="Pfam" id="PF02415">
    <property type="entry name" value="Chlam_PMP"/>
    <property type="match status" value="4"/>
</dbReference>
<dbReference type="Pfam" id="PF07548">
    <property type="entry name" value="ChlamPMP_M"/>
    <property type="match status" value="1"/>
</dbReference>
<dbReference type="SUPFAM" id="SSF103515">
    <property type="entry name" value="Autotransporter"/>
    <property type="match status" value="1"/>
</dbReference>
<dbReference type="PROSITE" id="PS51208">
    <property type="entry name" value="AUTOTRANSPORTER"/>
    <property type="match status" value="1"/>
</dbReference>
<evidence type="ECO:0000255" key="1"/>
<evidence type="ECO:0000255" key="2">
    <source>
        <dbReference type="PROSITE-ProRule" id="PRU00556"/>
    </source>
</evidence>
<evidence type="ECO:0000305" key="3"/>
<gene>
    <name type="primary">pmpA</name>
    <name type="ordered locus">TC_0693</name>
</gene>
<accession>Q9PJY3</accession>
<reference key="1">
    <citation type="journal article" date="2000" name="Nucleic Acids Res.">
        <title>Genome sequences of Chlamydia trachomatis MoPn and Chlamydia pneumoniae AR39.</title>
        <authorList>
            <person name="Read T.D."/>
            <person name="Brunham R.C."/>
            <person name="Shen C."/>
            <person name="Gill S.R."/>
            <person name="Heidelberg J.F."/>
            <person name="White O."/>
            <person name="Hickey E.K."/>
            <person name="Peterson J.D."/>
            <person name="Utterback T.R."/>
            <person name="Berry K.J."/>
            <person name="Bass S."/>
            <person name="Linher K.D."/>
            <person name="Weidman J.F."/>
            <person name="Khouri H.M."/>
            <person name="Craven B."/>
            <person name="Bowman C."/>
            <person name="Dodson R.J."/>
            <person name="Gwinn M.L."/>
            <person name="Nelson W.C."/>
            <person name="DeBoy R.T."/>
            <person name="Kolonay J.F."/>
            <person name="McClarty G."/>
            <person name="Salzberg S.L."/>
            <person name="Eisen J.A."/>
            <person name="Fraser C.M."/>
        </authorList>
    </citation>
    <scope>NUCLEOTIDE SEQUENCE [LARGE SCALE GENOMIC DNA]</scope>
    <source>
        <strain>MoPn / Nigg</strain>
    </source>
</reference>
<proteinExistence type="evidence at transcript level"/>